<dbReference type="EMBL" id="CP000896">
    <property type="protein sequence ID" value="ABX81456.1"/>
    <property type="molecule type" value="Genomic_DNA"/>
</dbReference>
<dbReference type="RefSeq" id="WP_012242787.1">
    <property type="nucleotide sequence ID" value="NC_010163.1"/>
</dbReference>
<dbReference type="SMR" id="A9NGH6"/>
<dbReference type="STRING" id="441768.ACL_0842"/>
<dbReference type="GeneID" id="41338997"/>
<dbReference type="KEGG" id="acl:ACL_0842"/>
<dbReference type="eggNOG" id="COG0291">
    <property type="taxonomic scope" value="Bacteria"/>
</dbReference>
<dbReference type="HOGENOM" id="CLU_169643_3_1_14"/>
<dbReference type="OrthoDB" id="47476at2"/>
<dbReference type="Proteomes" id="UP000008558">
    <property type="component" value="Chromosome"/>
</dbReference>
<dbReference type="GO" id="GO:0022625">
    <property type="term" value="C:cytosolic large ribosomal subunit"/>
    <property type="evidence" value="ECO:0007669"/>
    <property type="project" value="TreeGrafter"/>
</dbReference>
<dbReference type="GO" id="GO:0003735">
    <property type="term" value="F:structural constituent of ribosome"/>
    <property type="evidence" value="ECO:0007669"/>
    <property type="project" value="InterPro"/>
</dbReference>
<dbReference type="GO" id="GO:0006412">
    <property type="term" value="P:translation"/>
    <property type="evidence" value="ECO:0007669"/>
    <property type="project" value="UniProtKB-UniRule"/>
</dbReference>
<dbReference type="FunFam" id="4.10.410.60:FF:000001">
    <property type="entry name" value="50S ribosomal protein L35"/>
    <property type="match status" value="1"/>
</dbReference>
<dbReference type="Gene3D" id="4.10.410.60">
    <property type="match status" value="1"/>
</dbReference>
<dbReference type="HAMAP" id="MF_00514">
    <property type="entry name" value="Ribosomal_bL35"/>
    <property type="match status" value="1"/>
</dbReference>
<dbReference type="InterPro" id="IPR001706">
    <property type="entry name" value="Ribosomal_bL35"/>
</dbReference>
<dbReference type="InterPro" id="IPR021137">
    <property type="entry name" value="Ribosomal_bL35-like"/>
</dbReference>
<dbReference type="InterPro" id="IPR018265">
    <property type="entry name" value="Ribosomal_bL35_CS"/>
</dbReference>
<dbReference type="InterPro" id="IPR037229">
    <property type="entry name" value="Ribosomal_bL35_sf"/>
</dbReference>
<dbReference type="NCBIfam" id="TIGR00001">
    <property type="entry name" value="rpmI_bact"/>
    <property type="match status" value="1"/>
</dbReference>
<dbReference type="PANTHER" id="PTHR33343">
    <property type="entry name" value="54S RIBOSOMAL PROTEIN BL35M"/>
    <property type="match status" value="1"/>
</dbReference>
<dbReference type="PANTHER" id="PTHR33343:SF1">
    <property type="entry name" value="LARGE RIBOSOMAL SUBUNIT PROTEIN BL35M"/>
    <property type="match status" value="1"/>
</dbReference>
<dbReference type="Pfam" id="PF01632">
    <property type="entry name" value="Ribosomal_L35p"/>
    <property type="match status" value="1"/>
</dbReference>
<dbReference type="PRINTS" id="PR00064">
    <property type="entry name" value="RIBOSOMALL35"/>
</dbReference>
<dbReference type="SUPFAM" id="SSF143034">
    <property type="entry name" value="L35p-like"/>
    <property type="match status" value="1"/>
</dbReference>
<dbReference type="PROSITE" id="PS00936">
    <property type="entry name" value="RIBOSOMAL_L35"/>
    <property type="match status" value="1"/>
</dbReference>
<protein>
    <recommendedName>
        <fullName evidence="1">Large ribosomal subunit protein bL35</fullName>
    </recommendedName>
    <alternativeName>
        <fullName evidence="2">50S ribosomal protein L35</fullName>
    </alternativeName>
</protein>
<comment type="similarity">
    <text evidence="1">Belongs to the bacterial ribosomal protein bL35 family.</text>
</comment>
<reference key="1">
    <citation type="journal article" date="2011" name="J. Bacteriol.">
        <title>Complete genome and proteome of Acholeplasma laidlawii.</title>
        <authorList>
            <person name="Lazarev V.N."/>
            <person name="Levitskii S.A."/>
            <person name="Basovskii Y.I."/>
            <person name="Chukin M.M."/>
            <person name="Akopian T.A."/>
            <person name="Vereshchagin V.V."/>
            <person name="Kostrjukova E.S."/>
            <person name="Kovaleva G.Y."/>
            <person name="Kazanov M.D."/>
            <person name="Malko D.B."/>
            <person name="Vitreschak A.G."/>
            <person name="Sernova N.V."/>
            <person name="Gelfand M.S."/>
            <person name="Demina I.A."/>
            <person name="Serebryakova M.V."/>
            <person name="Galyamina M.A."/>
            <person name="Vtyurin N.N."/>
            <person name="Rogov S.I."/>
            <person name="Alexeev D.G."/>
            <person name="Ladygina V.G."/>
            <person name="Govorun V.M."/>
        </authorList>
    </citation>
    <scope>NUCLEOTIDE SEQUENCE [LARGE SCALE GENOMIC DNA]</scope>
    <source>
        <strain>PG-8A</strain>
    </source>
</reference>
<accession>A9NGH6</accession>
<gene>
    <name evidence="1" type="primary">rpmI</name>
    <name type="ordered locus">ACL_0842</name>
</gene>
<evidence type="ECO:0000255" key="1">
    <source>
        <dbReference type="HAMAP-Rule" id="MF_00514"/>
    </source>
</evidence>
<evidence type="ECO:0000305" key="2"/>
<proteinExistence type="inferred from homology"/>
<name>RL35_ACHLI</name>
<sequence length="66" mass="7468">MPKQKTHSGLKKRIKITATGKLMRHQAYSNHLAASKTTKQNRQLSAETTVHATDAKRIKRLIANMK</sequence>
<organism>
    <name type="scientific">Acholeplasma laidlawii (strain PG-8A)</name>
    <dbReference type="NCBI Taxonomy" id="441768"/>
    <lineage>
        <taxon>Bacteria</taxon>
        <taxon>Bacillati</taxon>
        <taxon>Mycoplasmatota</taxon>
        <taxon>Mollicutes</taxon>
        <taxon>Acholeplasmatales</taxon>
        <taxon>Acholeplasmataceae</taxon>
        <taxon>Acholeplasma</taxon>
    </lineage>
</organism>
<keyword id="KW-1185">Reference proteome</keyword>
<keyword id="KW-0687">Ribonucleoprotein</keyword>
<keyword id="KW-0689">Ribosomal protein</keyword>
<feature type="chain" id="PRO_1000081594" description="Large ribosomal subunit protein bL35">
    <location>
        <begin position="1"/>
        <end position="66"/>
    </location>
</feature>